<gene>
    <name evidence="1" type="primary">proS</name>
    <name type="ordered locus">DMR_24360</name>
</gene>
<keyword id="KW-0030">Aminoacyl-tRNA synthetase</keyword>
<keyword id="KW-0067">ATP-binding</keyword>
<keyword id="KW-0963">Cytoplasm</keyword>
<keyword id="KW-0436">Ligase</keyword>
<keyword id="KW-0547">Nucleotide-binding</keyword>
<keyword id="KW-0648">Protein biosynthesis</keyword>
<name>SYP_SOLM1</name>
<dbReference type="EC" id="6.1.1.15" evidence="1"/>
<dbReference type="EMBL" id="AP010904">
    <property type="protein sequence ID" value="BAH75927.1"/>
    <property type="molecule type" value="Genomic_DNA"/>
</dbReference>
<dbReference type="RefSeq" id="WP_015861106.1">
    <property type="nucleotide sequence ID" value="NC_012796.1"/>
</dbReference>
<dbReference type="SMR" id="C4XTD0"/>
<dbReference type="STRING" id="573370.DMR_24360"/>
<dbReference type="KEGG" id="dma:DMR_24360"/>
<dbReference type="eggNOG" id="COG0442">
    <property type="taxonomic scope" value="Bacteria"/>
</dbReference>
<dbReference type="HOGENOM" id="CLU_016739_0_0_7"/>
<dbReference type="OrthoDB" id="9809052at2"/>
<dbReference type="Proteomes" id="UP000009071">
    <property type="component" value="Chromosome"/>
</dbReference>
<dbReference type="GO" id="GO:0005829">
    <property type="term" value="C:cytosol"/>
    <property type="evidence" value="ECO:0007669"/>
    <property type="project" value="TreeGrafter"/>
</dbReference>
<dbReference type="GO" id="GO:0002161">
    <property type="term" value="F:aminoacyl-tRNA deacylase activity"/>
    <property type="evidence" value="ECO:0007669"/>
    <property type="project" value="InterPro"/>
</dbReference>
<dbReference type="GO" id="GO:0005524">
    <property type="term" value="F:ATP binding"/>
    <property type="evidence" value="ECO:0007669"/>
    <property type="project" value="UniProtKB-UniRule"/>
</dbReference>
<dbReference type="GO" id="GO:0004827">
    <property type="term" value="F:proline-tRNA ligase activity"/>
    <property type="evidence" value="ECO:0007669"/>
    <property type="project" value="UniProtKB-UniRule"/>
</dbReference>
<dbReference type="GO" id="GO:0006433">
    <property type="term" value="P:prolyl-tRNA aminoacylation"/>
    <property type="evidence" value="ECO:0007669"/>
    <property type="project" value="UniProtKB-UniRule"/>
</dbReference>
<dbReference type="CDD" id="cd04334">
    <property type="entry name" value="ProRS-INS"/>
    <property type="match status" value="1"/>
</dbReference>
<dbReference type="CDD" id="cd00861">
    <property type="entry name" value="ProRS_anticodon_short"/>
    <property type="match status" value="1"/>
</dbReference>
<dbReference type="CDD" id="cd00779">
    <property type="entry name" value="ProRS_core_prok"/>
    <property type="match status" value="1"/>
</dbReference>
<dbReference type="FunFam" id="3.30.930.10:FF:000065">
    <property type="entry name" value="Proline--tRNA ligase"/>
    <property type="match status" value="1"/>
</dbReference>
<dbReference type="FunFam" id="3.30.930.10:FF:000066">
    <property type="entry name" value="Proline--tRNA ligase"/>
    <property type="match status" value="1"/>
</dbReference>
<dbReference type="Gene3D" id="3.40.50.800">
    <property type="entry name" value="Anticodon-binding domain"/>
    <property type="match status" value="1"/>
</dbReference>
<dbReference type="Gene3D" id="3.30.930.10">
    <property type="entry name" value="Bira Bifunctional Protein, Domain 2"/>
    <property type="match status" value="2"/>
</dbReference>
<dbReference type="Gene3D" id="3.90.960.10">
    <property type="entry name" value="YbaK/aminoacyl-tRNA synthetase-associated domain"/>
    <property type="match status" value="1"/>
</dbReference>
<dbReference type="HAMAP" id="MF_01569">
    <property type="entry name" value="Pro_tRNA_synth_type1"/>
    <property type="match status" value="1"/>
</dbReference>
<dbReference type="InterPro" id="IPR002314">
    <property type="entry name" value="aa-tRNA-synt_IIb"/>
</dbReference>
<dbReference type="InterPro" id="IPR006195">
    <property type="entry name" value="aa-tRNA-synth_II"/>
</dbReference>
<dbReference type="InterPro" id="IPR045864">
    <property type="entry name" value="aa-tRNA-synth_II/BPL/LPL"/>
</dbReference>
<dbReference type="InterPro" id="IPR004154">
    <property type="entry name" value="Anticodon-bd"/>
</dbReference>
<dbReference type="InterPro" id="IPR036621">
    <property type="entry name" value="Anticodon-bd_dom_sf"/>
</dbReference>
<dbReference type="InterPro" id="IPR002316">
    <property type="entry name" value="Pro-tRNA-ligase_IIa"/>
</dbReference>
<dbReference type="InterPro" id="IPR004500">
    <property type="entry name" value="Pro-tRNA-synth_IIa_bac-type"/>
</dbReference>
<dbReference type="InterPro" id="IPR023717">
    <property type="entry name" value="Pro-tRNA-Synthase_IIa_type1"/>
</dbReference>
<dbReference type="InterPro" id="IPR050062">
    <property type="entry name" value="Pro-tRNA_synthetase"/>
</dbReference>
<dbReference type="InterPro" id="IPR044140">
    <property type="entry name" value="ProRS_anticodon_short"/>
</dbReference>
<dbReference type="InterPro" id="IPR033730">
    <property type="entry name" value="ProRS_core_prok"/>
</dbReference>
<dbReference type="InterPro" id="IPR036754">
    <property type="entry name" value="YbaK/aa-tRNA-synt-asso_dom_sf"/>
</dbReference>
<dbReference type="InterPro" id="IPR007214">
    <property type="entry name" value="YbaK/aa-tRNA-synth-assoc-dom"/>
</dbReference>
<dbReference type="NCBIfam" id="NF006625">
    <property type="entry name" value="PRK09194.1"/>
    <property type="match status" value="1"/>
</dbReference>
<dbReference type="NCBIfam" id="TIGR00409">
    <property type="entry name" value="proS_fam_II"/>
    <property type="match status" value="1"/>
</dbReference>
<dbReference type="PANTHER" id="PTHR42753">
    <property type="entry name" value="MITOCHONDRIAL RIBOSOME PROTEIN L39/PROLYL-TRNA LIGASE FAMILY MEMBER"/>
    <property type="match status" value="1"/>
</dbReference>
<dbReference type="PANTHER" id="PTHR42753:SF2">
    <property type="entry name" value="PROLINE--TRNA LIGASE"/>
    <property type="match status" value="1"/>
</dbReference>
<dbReference type="Pfam" id="PF03129">
    <property type="entry name" value="HGTP_anticodon"/>
    <property type="match status" value="1"/>
</dbReference>
<dbReference type="Pfam" id="PF00587">
    <property type="entry name" value="tRNA-synt_2b"/>
    <property type="match status" value="1"/>
</dbReference>
<dbReference type="Pfam" id="PF04073">
    <property type="entry name" value="tRNA_edit"/>
    <property type="match status" value="1"/>
</dbReference>
<dbReference type="PIRSF" id="PIRSF001535">
    <property type="entry name" value="ProRS_1"/>
    <property type="match status" value="1"/>
</dbReference>
<dbReference type="PRINTS" id="PR01046">
    <property type="entry name" value="TRNASYNTHPRO"/>
</dbReference>
<dbReference type="SUPFAM" id="SSF52954">
    <property type="entry name" value="Class II aaRS ABD-related"/>
    <property type="match status" value="1"/>
</dbReference>
<dbReference type="SUPFAM" id="SSF55681">
    <property type="entry name" value="Class II aaRS and biotin synthetases"/>
    <property type="match status" value="1"/>
</dbReference>
<dbReference type="SUPFAM" id="SSF55826">
    <property type="entry name" value="YbaK/ProRS associated domain"/>
    <property type="match status" value="1"/>
</dbReference>
<dbReference type="PROSITE" id="PS50862">
    <property type="entry name" value="AA_TRNA_LIGASE_II"/>
    <property type="match status" value="1"/>
</dbReference>
<reference key="1">
    <citation type="journal article" date="2009" name="Genome Res.">
        <title>Whole genome sequence of Desulfovibrio magneticus strain RS-1 revealed common gene clusters in magnetotactic bacteria.</title>
        <authorList>
            <person name="Nakazawa H."/>
            <person name="Arakaki A."/>
            <person name="Narita-Yamada S."/>
            <person name="Yashiro I."/>
            <person name="Jinno K."/>
            <person name="Aoki N."/>
            <person name="Tsuruyama A."/>
            <person name="Okamura Y."/>
            <person name="Tanikawa S."/>
            <person name="Fujita N."/>
            <person name="Takeyama H."/>
            <person name="Matsunaga T."/>
        </authorList>
    </citation>
    <scope>NUCLEOTIDE SEQUENCE [LARGE SCALE GENOMIC DNA]</scope>
    <source>
        <strain>ATCC 700980 / DSM 13731 / RS-1</strain>
    </source>
</reference>
<proteinExistence type="inferred from homology"/>
<protein>
    <recommendedName>
        <fullName evidence="1">Proline--tRNA ligase</fullName>
        <ecNumber evidence="1">6.1.1.15</ecNumber>
    </recommendedName>
    <alternativeName>
        <fullName evidence="1">Prolyl-tRNA synthetase</fullName>
        <shortName evidence="1">ProRS</shortName>
    </alternativeName>
</protein>
<comment type="function">
    <text evidence="1">Catalyzes the attachment of proline to tRNA(Pro) in a two-step reaction: proline is first activated by ATP to form Pro-AMP and then transferred to the acceptor end of tRNA(Pro). As ProRS can inadvertently accommodate and process non-cognate amino acids such as alanine and cysteine, to avoid such errors it has two additional distinct editing activities against alanine. One activity is designated as 'pretransfer' editing and involves the tRNA(Pro)-independent hydrolysis of activated Ala-AMP. The other activity is designated 'posttransfer' editing and involves deacylation of mischarged Ala-tRNA(Pro). The misacylated Cys-tRNA(Pro) is not edited by ProRS.</text>
</comment>
<comment type="catalytic activity">
    <reaction evidence="1">
        <text>tRNA(Pro) + L-proline + ATP = L-prolyl-tRNA(Pro) + AMP + diphosphate</text>
        <dbReference type="Rhea" id="RHEA:14305"/>
        <dbReference type="Rhea" id="RHEA-COMP:9700"/>
        <dbReference type="Rhea" id="RHEA-COMP:9702"/>
        <dbReference type="ChEBI" id="CHEBI:30616"/>
        <dbReference type="ChEBI" id="CHEBI:33019"/>
        <dbReference type="ChEBI" id="CHEBI:60039"/>
        <dbReference type="ChEBI" id="CHEBI:78442"/>
        <dbReference type="ChEBI" id="CHEBI:78532"/>
        <dbReference type="ChEBI" id="CHEBI:456215"/>
        <dbReference type="EC" id="6.1.1.15"/>
    </reaction>
</comment>
<comment type="subunit">
    <text evidence="1">Homodimer.</text>
</comment>
<comment type="subcellular location">
    <subcellularLocation>
        <location evidence="1">Cytoplasm</location>
    </subcellularLocation>
</comment>
<comment type="domain">
    <text evidence="1">Consists of three domains: the N-terminal catalytic domain, the editing domain and the C-terminal anticodon-binding domain.</text>
</comment>
<comment type="similarity">
    <text evidence="1">Belongs to the class-II aminoacyl-tRNA synthetase family. ProS type 1 subfamily.</text>
</comment>
<accession>C4XTD0</accession>
<organism>
    <name type="scientific">Solidesulfovibrio magneticus (strain ATCC 700980 / DSM 13731 / RS-1)</name>
    <name type="common">Desulfovibrio magneticus</name>
    <dbReference type="NCBI Taxonomy" id="573370"/>
    <lineage>
        <taxon>Bacteria</taxon>
        <taxon>Pseudomonadati</taxon>
        <taxon>Thermodesulfobacteriota</taxon>
        <taxon>Desulfovibrionia</taxon>
        <taxon>Desulfovibrionales</taxon>
        <taxon>Desulfovibrionaceae</taxon>
        <taxon>Solidesulfovibrio</taxon>
    </lineage>
</organism>
<sequence length="575" mass="62749">MRLSRYYAPTLKETPAEAEVISHKLLLRAGMIRKLTAGIYTYLPLGLKALNNVAKIVREEMDRAGALEILMPAVQPADLWKESGRWDFYGRELLRFVDRHDRESCLGPTHEEVVTDLVRHEIRSYRQLPVNLYQIQTKFRDEIRPRFGLMRGREFVMKDAYSFDKDDSGADASYWGMYEAYARIFKRLGLKFRAVAADSGAIGGSFSHEFMVLADTGEDTIVACPACDYGANVEKAEAICPPAGDLAPCPAAEKIATPGQHTVEELAAFLKVPVASVIKTLLYVADGKTVAALVRGDRELNEVKFKNLLDAKEDLRLATPEEVTAATGAPVGFAGPVGLSLPVYADRELALANDWVVGANAADAHLLHVDLGRDANVVSYTDLREVAPGDPCPKCGALLDFTKGIEVGHVFKLGLKYSKALNATFLDEAGKEQFMIMGCYGIGVSRIVASAIEQNHDDGGIVFPPTIAPFEAALINLSPKDETACAKADEIYAALTAAGIETLLDDRDERPGVKFKDADLMGHPIQLTLGGKGLARGIVETKDRRTGEKGELPLEGFFEAFAAWRAGVREGWGLE</sequence>
<evidence type="ECO:0000255" key="1">
    <source>
        <dbReference type="HAMAP-Rule" id="MF_01569"/>
    </source>
</evidence>
<feature type="chain" id="PRO_1000215526" description="Proline--tRNA ligase">
    <location>
        <begin position="1"/>
        <end position="575"/>
    </location>
</feature>